<dbReference type="EC" id="3.1.26.11" evidence="1"/>
<dbReference type="EMBL" id="AE016877">
    <property type="protein sequence ID" value="AAP11054.1"/>
    <property type="molecule type" value="Genomic_DNA"/>
</dbReference>
<dbReference type="RefSeq" id="NP_833853.1">
    <property type="nucleotide sequence ID" value="NC_004722.1"/>
</dbReference>
<dbReference type="RefSeq" id="WP_000397455.1">
    <property type="nucleotide sequence ID" value="NZ_CP138336.1"/>
</dbReference>
<dbReference type="SMR" id="Q818V3"/>
<dbReference type="STRING" id="226900.BC_4138"/>
<dbReference type="KEGG" id="bce:BC4138"/>
<dbReference type="PATRIC" id="fig|226900.8.peg.4277"/>
<dbReference type="HOGENOM" id="CLU_031317_2_0_9"/>
<dbReference type="OrthoDB" id="9800940at2"/>
<dbReference type="Proteomes" id="UP000001417">
    <property type="component" value="Chromosome"/>
</dbReference>
<dbReference type="GO" id="GO:0042781">
    <property type="term" value="F:3'-tRNA processing endoribonuclease activity"/>
    <property type="evidence" value="ECO:0000318"/>
    <property type="project" value="GO_Central"/>
</dbReference>
<dbReference type="GO" id="GO:0008270">
    <property type="term" value="F:zinc ion binding"/>
    <property type="evidence" value="ECO:0007669"/>
    <property type="project" value="UniProtKB-UniRule"/>
</dbReference>
<dbReference type="CDD" id="cd07717">
    <property type="entry name" value="RNaseZ_ZiPD-like_MBL-fold"/>
    <property type="match status" value="1"/>
</dbReference>
<dbReference type="FunFam" id="3.60.15.10:FF:000002">
    <property type="entry name" value="Ribonuclease Z"/>
    <property type="match status" value="1"/>
</dbReference>
<dbReference type="Gene3D" id="3.60.15.10">
    <property type="entry name" value="Ribonuclease Z/Hydroxyacylglutathione hydrolase-like"/>
    <property type="match status" value="1"/>
</dbReference>
<dbReference type="HAMAP" id="MF_01818">
    <property type="entry name" value="RNase_Z_BN"/>
    <property type="match status" value="1"/>
</dbReference>
<dbReference type="InterPro" id="IPR001279">
    <property type="entry name" value="Metallo-B-lactamas"/>
</dbReference>
<dbReference type="InterPro" id="IPR036866">
    <property type="entry name" value="RibonucZ/Hydroxyglut_hydro"/>
</dbReference>
<dbReference type="InterPro" id="IPR013471">
    <property type="entry name" value="RNase_Z/BN"/>
</dbReference>
<dbReference type="NCBIfam" id="NF000800">
    <property type="entry name" value="PRK00055.1-1"/>
    <property type="match status" value="1"/>
</dbReference>
<dbReference type="NCBIfam" id="NF000801">
    <property type="entry name" value="PRK00055.1-3"/>
    <property type="match status" value="1"/>
</dbReference>
<dbReference type="NCBIfam" id="TIGR02651">
    <property type="entry name" value="RNase_Z"/>
    <property type="match status" value="1"/>
</dbReference>
<dbReference type="PANTHER" id="PTHR46018">
    <property type="entry name" value="ZINC PHOSPHODIESTERASE ELAC PROTEIN 1"/>
    <property type="match status" value="1"/>
</dbReference>
<dbReference type="PANTHER" id="PTHR46018:SF2">
    <property type="entry name" value="ZINC PHOSPHODIESTERASE ELAC PROTEIN 1"/>
    <property type="match status" value="1"/>
</dbReference>
<dbReference type="Pfam" id="PF00753">
    <property type="entry name" value="Lactamase_B"/>
    <property type="match status" value="1"/>
</dbReference>
<dbReference type="Pfam" id="PF12706">
    <property type="entry name" value="Lactamase_B_2"/>
    <property type="match status" value="1"/>
</dbReference>
<dbReference type="SMART" id="SM00849">
    <property type="entry name" value="Lactamase_B"/>
    <property type="match status" value="1"/>
</dbReference>
<dbReference type="SUPFAM" id="SSF56281">
    <property type="entry name" value="Metallo-hydrolase/oxidoreductase"/>
    <property type="match status" value="1"/>
</dbReference>
<organism>
    <name type="scientific">Bacillus cereus (strain ATCC 14579 / DSM 31 / CCUG 7414 / JCM 2152 / NBRC 15305 / NCIMB 9373 / NCTC 2599 / NRRL B-3711)</name>
    <dbReference type="NCBI Taxonomy" id="226900"/>
    <lineage>
        <taxon>Bacteria</taxon>
        <taxon>Bacillati</taxon>
        <taxon>Bacillota</taxon>
        <taxon>Bacilli</taxon>
        <taxon>Bacillales</taxon>
        <taxon>Bacillaceae</taxon>
        <taxon>Bacillus</taxon>
        <taxon>Bacillus cereus group</taxon>
    </lineage>
</organism>
<name>RNZ_BACCR</name>
<comment type="function">
    <text evidence="1">Zinc phosphodiesterase, which displays some tRNA 3'-processing endonuclease activity. Probably involved in tRNA maturation, by removing a 3'-trailer from precursor tRNA.</text>
</comment>
<comment type="catalytic activity">
    <reaction evidence="1">
        <text>Endonucleolytic cleavage of RNA, removing extra 3' nucleotides from tRNA precursor, generating 3' termini of tRNAs. A 3'-hydroxy group is left at the tRNA terminus and a 5'-phosphoryl group is left at the trailer molecule.</text>
        <dbReference type="EC" id="3.1.26.11"/>
    </reaction>
</comment>
<comment type="cofactor">
    <cofactor evidence="1">
        <name>Zn(2+)</name>
        <dbReference type="ChEBI" id="CHEBI:29105"/>
    </cofactor>
    <text evidence="1">Binds 2 Zn(2+) ions.</text>
</comment>
<comment type="subunit">
    <text evidence="1">Homodimer.</text>
</comment>
<comment type="similarity">
    <text evidence="1">Belongs to the RNase Z family.</text>
</comment>
<protein>
    <recommendedName>
        <fullName evidence="1">Ribonuclease Z</fullName>
        <shortName evidence="1">RNase Z</shortName>
        <ecNumber evidence="1">3.1.26.11</ecNumber>
    </recommendedName>
    <alternativeName>
        <fullName evidence="1">tRNA 3 endonuclease</fullName>
    </alternativeName>
    <alternativeName>
        <fullName evidence="1">tRNase Z</fullName>
    </alternativeName>
</protein>
<reference key="1">
    <citation type="journal article" date="2003" name="Nature">
        <title>Genome sequence of Bacillus cereus and comparative analysis with Bacillus anthracis.</title>
        <authorList>
            <person name="Ivanova N."/>
            <person name="Sorokin A."/>
            <person name="Anderson I."/>
            <person name="Galleron N."/>
            <person name="Candelon B."/>
            <person name="Kapatral V."/>
            <person name="Bhattacharyya A."/>
            <person name="Reznik G."/>
            <person name="Mikhailova N."/>
            <person name="Lapidus A."/>
            <person name="Chu L."/>
            <person name="Mazur M."/>
            <person name="Goltsman E."/>
            <person name="Larsen N."/>
            <person name="D'Souza M."/>
            <person name="Walunas T."/>
            <person name="Grechkin Y."/>
            <person name="Pusch G."/>
            <person name="Haselkorn R."/>
            <person name="Fonstein M."/>
            <person name="Ehrlich S.D."/>
            <person name="Overbeek R."/>
            <person name="Kyrpides N.C."/>
        </authorList>
    </citation>
    <scope>NUCLEOTIDE SEQUENCE [LARGE SCALE GENOMIC DNA]</scope>
    <source>
        <strain>ATCC 14579 / DSM 31 / CCUG 7414 / JCM 2152 / NBRC 15305 / NCIMB 9373 / NCTC 2599 / NRRL B-3711</strain>
    </source>
</reference>
<accession>Q818V3</accession>
<feature type="chain" id="PRO_0000155841" description="Ribonuclease Z">
    <location>
        <begin position="1"/>
        <end position="307"/>
    </location>
</feature>
<feature type="active site" description="Proton acceptor" evidence="1">
    <location>
        <position position="67"/>
    </location>
</feature>
<feature type="binding site" evidence="1">
    <location>
        <position position="63"/>
    </location>
    <ligand>
        <name>Zn(2+)</name>
        <dbReference type="ChEBI" id="CHEBI:29105"/>
        <label>1</label>
        <note>catalytic</note>
    </ligand>
</feature>
<feature type="binding site" evidence="1">
    <location>
        <position position="65"/>
    </location>
    <ligand>
        <name>Zn(2+)</name>
        <dbReference type="ChEBI" id="CHEBI:29105"/>
        <label>1</label>
        <note>catalytic</note>
    </ligand>
</feature>
<feature type="binding site" evidence="1">
    <location>
        <position position="67"/>
    </location>
    <ligand>
        <name>Zn(2+)</name>
        <dbReference type="ChEBI" id="CHEBI:29105"/>
        <label>2</label>
        <note>catalytic</note>
    </ligand>
</feature>
<feature type="binding site" evidence="1">
    <location>
        <position position="68"/>
    </location>
    <ligand>
        <name>Zn(2+)</name>
        <dbReference type="ChEBI" id="CHEBI:29105"/>
        <label>2</label>
        <note>catalytic</note>
    </ligand>
</feature>
<feature type="binding site" evidence="1">
    <location>
        <position position="141"/>
    </location>
    <ligand>
        <name>Zn(2+)</name>
        <dbReference type="ChEBI" id="CHEBI:29105"/>
        <label>1</label>
        <note>catalytic</note>
    </ligand>
</feature>
<feature type="binding site" evidence="1">
    <location>
        <position position="212"/>
    </location>
    <ligand>
        <name>Zn(2+)</name>
        <dbReference type="ChEBI" id="CHEBI:29105"/>
        <label>1</label>
        <note>catalytic</note>
    </ligand>
</feature>
<feature type="binding site" evidence="1">
    <location>
        <position position="212"/>
    </location>
    <ligand>
        <name>Zn(2+)</name>
        <dbReference type="ChEBI" id="CHEBI:29105"/>
        <label>2</label>
        <note>catalytic</note>
    </ligand>
</feature>
<feature type="binding site" evidence="1">
    <location>
        <position position="270"/>
    </location>
    <ligand>
        <name>Zn(2+)</name>
        <dbReference type="ChEBI" id="CHEBI:29105"/>
        <label>2</label>
        <note>catalytic</note>
    </ligand>
</feature>
<proteinExistence type="inferred from homology"/>
<keyword id="KW-0255">Endonuclease</keyword>
<keyword id="KW-0378">Hydrolase</keyword>
<keyword id="KW-0479">Metal-binding</keyword>
<keyword id="KW-0540">Nuclease</keyword>
<keyword id="KW-1185">Reference proteome</keyword>
<keyword id="KW-0819">tRNA processing</keyword>
<keyword id="KW-0862">Zinc</keyword>
<sequence>MEFVFLGTGAGVPSKGRNVSAIALQLLEERGQTWLFDCGEATQHQILHTSVRPRRIEKIFITHLHGDHIFGLPGLLGSRSFQGGTTPLTVYGPKGIKQFIEVALSVSTTHVKYPLEVVEITEEGTVFEDNEFYVETKRLSHGIECFGYRIVEKDIQGALLVDKLLEMGVKPGPIFKRLKDGEVVELEDGTILNGNEFIGPPQKGRIITILGDTRYCEASRELAQDADVLVHEATFAAEDEQQAYDYFHSTSKQAASIALQANAKRLILTHISSRYQGDTYKELLKEARELFSNTEIATDLKSFPVEK</sequence>
<evidence type="ECO:0000255" key="1">
    <source>
        <dbReference type="HAMAP-Rule" id="MF_01818"/>
    </source>
</evidence>
<gene>
    <name evidence="1" type="primary">rnz</name>
    <name type="ordered locus">BC_4138</name>
</gene>